<keyword id="KW-0210">Decarboxylase</keyword>
<keyword id="KW-0456">Lyase</keyword>
<keyword id="KW-0665">Pyrimidine biosynthesis</keyword>
<keyword id="KW-1185">Reference proteome</keyword>
<name>PYRF_ASPFU</name>
<gene>
    <name type="primary">pyrG</name>
    <name type="ORF">AFUA_2G08360</name>
</gene>
<protein>
    <recommendedName>
        <fullName>Orotidine 5'-phosphate decarboxylase</fullName>
        <ecNumber>4.1.1.23</ecNumber>
    </recommendedName>
    <alternativeName>
        <fullName>OMP decarboxylase</fullName>
        <shortName>OMPDCase</shortName>
        <shortName>OMPdecase</shortName>
    </alternativeName>
    <alternativeName>
        <fullName>Uridine 5'-monophosphate synthase</fullName>
        <shortName>UMP synthase</shortName>
    </alternativeName>
</protein>
<proteinExistence type="inferred from homology"/>
<accession>O13410</accession>
<accession>Q4X1Y3</accession>
<organism>
    <name type="scientific">Aspergillus fumigatus (strain ATCC MYA-4609 / CBS 101355 / FGSC A1100 / Af293)</name>
    <name type="common">Neosartorya fumigata</name>
    <dbReference type="NCBI Taxonomy" id="330879"/>
    <lineage>
        <taxon>Eukaryota</taxon>
        <taxon>Fungi</taxon>
        <taxon>Dikarya</taxon>
        <taxon>Ascomycota</taxon>
        <taxon>Pezizomycotina</taxon>
        <taxon>Eurotiomycetes</taxon>
        <taxon>Eurotiomycetidae</taxon>
        <taxon>Eurotiales</taxon>
        <taxon>Aspergillaceae</taxon>
        <taxon>Aspergillus</taxon>
        <taxon>Aspergillus subgen. Fumigati</taxon>
    </lineage>
</organism>
<evidence type="ECO:0000250" key="1"/>
<evidence type="ECO:0000255" key="2">
    <source>
        <dbReference type="PROSITE-ProRule" id="PRU10110"/>
    </source>
</evidence>
<evidence type="ECO:0000305" key="3"/>
<comment type="catalytic activity">
    <reaction evidence="2">
        <text>orotidine 5'-phosphate + H(+) = UMP + CO2</text>
        <dbReference type="Rhea" id="RHEA:11596"/>
        <dbReference type="ChEBI" id="CHEBI:15378"/>
        <dbReference type="ChEBI" id="CHEBI:16526"/>
        <dbReference type="ChEBI" id="CHEBI:57538"/>
        <dbReference type="ChEBI" id="CHEBI:57865"/>
        <dbReference type="EC" id="4.1.1.23"/>
    </reaction>
</comment>
<comment type="pathway">
    <text>Pyrimidine metabolism; UMP biosynthesis via de novo pathway; UMP from orotate: step 2/2.</text>
</comment>
<comment type="similarity">
    <text evidence="3">Belongs to the OMP decarboxylase family.</text>
</comment>
<reference key="1">
    <citation type="journal article" date="1998" name="Curr. Genet.">
        <title>Development of a homologous transformation system for the human pathogenic fungus Aspergillus fumigatus based on the pyrG gene encoding orotidine 5'-monophosphate decarboxylase.</title>
        <authorList>
            <person name="Weidner G."/>
            <person name="D'Enfert C."/>
            <person name="Koch A."/>
            <person name="Mol P.C."/>
            <person name="Brakhage A.A."/>
        </authorList>
    </citation>
    <scope>NUCLEOTIDE SEQUENCE [GENOMIC DNA]</scope>
    <source>
        <strain>NIH 5233 / ATCC 13073</strain>
    </source>
</reference>
<reference key="2">
    <citation type="journal article" date="2005" name="Nature">
        <title>Genomic sequence of the pathogenic and allergenic filamentous fungus Aspergillus fumigatus.</title>
        <authorList>
            <person name="Nierman W.C."/>
            <person name="Pain A."/>
            <person name="Anderson M.J."/>
            <person name="Wortman J.R."/>
            <person name="Kim H.S."/>
            <person name="Arroyo J."/>
            <person name="Berriman M."/>
            <person name="Abe K."/>
            <person name="Archer D.B."/>
            <person name="Bermejo C."/>
            <person name="Bennett J.W."/>
            <person name="Bowyer P."/>
            <person name="Chen D."/>
            <person name="Collins M."/>
            <person name="Coulsen R."/>
            <person name="Davies R."/>
            <person name="Dyer P.S."/>
            <person name="Farman M.L."/>
            <person name="Fedorova N."/>
            <person name="Fedorova N.D."/>
            <person name="Feldblyum T.V."/>
            <person name="Fischer R."/>
            <person name="Fosker N."/>
            <person name="Fraser A."/>
            <person name="Garcia J.L."/>
            <person name="Garcia M.J."/>
            <person name="Goble A."/>
            <person name="Goldman G.H."/>
            <person name="Gomi K."/>
            <person name="Griffith-Jones S."/>
            <person name="Gwilliam R."/>
            <person name="Haas B.J."/>
            <person name="Haas H."/>
            <person name="Harris D.E."/>
            <person name="Horiuchi H."/>
            <person name="Huang J."/>
            <person name="Humphray S."/>
            <person name="Jimenez J."/>
            <person name="Keller N."/>
            <person name="Khouri H."/>
            <person name="Kitamoto K."/>
            <person name="Kobayashi T."/>
            <person name="Konzack S."/>
            <person name="Kulkarni R."/>
            <person name="Kumagai T."/>
            <person name="Lafton A."/>
            <person name="Latge J.-P."/>
            <person name="Li W."/>
            <person name="Lord A."/>
            <person name="Lu C."/>
            <person name="Majoros W.H."/>
            <person name="May G.S."/>
            <person name="Miller B.L."/>
            <person name="Mohamoud Y."/>
            <person name="Molina M."/>
            <person name="Monod M."/>
            <person name="Mouyna I."/>
            <person name="Mulligan S."/>
            <person name="Murphy L.D."/>
            <person name="O'Neil S."/>
            <person name="Paulsen I."/>
            <person name="Penalva M.A."/>
            <person name="Pertea M."/>
            <person name="Price C."/>
            <person name="Pritchard B.L."/>
            <person name="Quail M.A."/>
            <person name="Rabbinowitsch E."/>
            <person name="Rawlins N."/>
            <person name="Rajandream M.A."/>
            <person name="Reichard U."/>
            <person name="Renauld H."/>
            <person name="Robson G.D."/>
            <person name="Rodriguez de Cordoba S."/>
            <person name="Rodriguez-Pena J.M."/>
            <person name="Ronning C.M."/>
            <person name="Rutter S."/>
            <person name="Salzberg S.L."/>
            <person name="Sanchez M."/>
            <person name="Sanchez-Ferrero J.C."/>
            <person name="Saunders D."/>
            <person name="Seeger K."/>
            <person name="Squares R."/>
            <person name="Squares S."/>
            <person name="Takeuchi M."/>
            <person name="Tekaia F."/>
            <person name="Turner G."/>
            <person name="Vazquez de Aldana C.R."/>
            <person name="Weidman J."/>
            <person name="White O."/>
            <person name="Woodward J.R."/>
            <person name="Yu J.-H."/>
            <person name="Fraser C.M."/>
            <person name="Galagan J.E."/>
            <person name="Asai K."/>
            <person name="Machida M."/>
            <person name="Hall N."/>
            <person name="Barrell B.G."/>
            <person name="Denning D.W."/>
        </authorList>
    </citation>
    <scope>NUCLEOTIDE SEQUENCE [LARGE SCALE GENOMIC DNA]</scope>
    <source>
        <strain>ATCC MYA-4609 / CBS 101355 / FGSC A1100 / Af293</strain>
    </source>
</reference>
<feature type="chain" id="PRO_0000134641" description="Orotidine 5'-phosphate decarboxylase">
    <location>
        <begin position="1"/>
        <end position="278"/>
    </location>
</feature>
<feature type="active site" description="Proton donor" evidence="2">
    <location>
        <position position="95"/>
    </location>
</feature>
<feature type="binding site" evidence="1">
    <location>
        <position position="40"/>
    </location>
    <ligand>
        <name>substrate</name>
    </ligand>
</feature>
<feature type="binding site" evidence="1">
    <location>
        <begin position="62"/>
        <end position="64"/>
    </location>
    <ligand>
        <name>substrate</name>
    </ligand>
</feature>
<feature type="binding site" evidence="1">
    <location>
        <begin position="93"/>
        <end position="102"/>
    </location>
    <ligand>
        <name>substrate</name>
    </ligand>
</feature>
<feature type="binding site" evidence="1">
    <location>
        <position position="229"/>
    </location>
    <ligand>
        <name>substrate</name>
    </ligand>
</feature>
<feature type="binding site" evidence="1">
    <location>
        <position position="247"/>
    </location>
    <ligand>
        <name>substrate</name>
    </ligand>
</feature>
<sequence>MSSKSQLTYGARASKHPNPLAKRLFEIAEAKKTNVTVSADVTTTRELLDLADRLGPYIAVIKTHIDILTDFSVDTINGLNVLAQKHNFLIFEDRKFIDIGNTVQKQYHGGALRISEWAHIINCSVLPGEGIVEALAQTASAQDFPYGPERGLLVLAEMTSKGSLATGEYTKASVDYARKYKNFVMGFVSTRALTEVQSDVSSASEDEDFVVFTTGVNLSSKGDKLGQQYQTPASAIGRGADFIIAGRGIYAAPDPVEAAQRYQKEGWEAYMARVCGKS</sequence>
<dbReference type="EC" id="4.1.1.23"/>
<dbReference type="EMBL" id="Y11303">
    <property type="protein sequence ID" value="CAA72161.1"/>
    <property type="molecule type" value="Genomic_DNA"/>
</dbReference>
<dbReference type="EMBL" id="AAHF01000001">
    <property type="protein sequence ID" value="EAL93132.1"/>
    <property type="molecule type" value="Genomic_DNA"/>
</dbReference>
<dbReference type="RefSeq" id="XP_755170.1">
    <property type="nucleotide sequence ID" value="XM_750077.1"/>
</dbReference>
<dbReference type="SMR" id="O13410"/>
<dbReference type="FunCoup" id="O13410">
    <property type="interactions" value="1095"/>
</dbReference>
<dbReference type="STRING" id="330879.O13410"/>
<dbReference type="EnsemblFungi" id="EAL93132">
    <property type="protein sequence ID" value="EAL93132"/>
    <property type="gene ID" value="AFUA_2G08360"/>
</dbReference>
<dbReference type="GeneID" id="3513211"/>
<dbReference type="KEGG" id="afm:AFUA_2G08360"/>
<dbReference type="VEuPathDB" id="FungiDB:Afu2g08360"/>
<dbReference type="eggNOG" id="KOG1377">
    <property type="taxonomic scope" value="Eukaryota"/>
</dbReference>
<dbReference type="HOGENOM" id="CLU_030821_0_0_1"/>
<dbReference type="InParanoid" id="O13410"/>
<dbReference type="OMA" id="CLIKTHI"/>
<dbReference type="OrthoDB" id="10263753at2759"/>
<dbReference type="UniPathway" id="UPA00070">
    <property type="reaction ID" value="UER00120"/>
</dbReference>
<dbReference type="Proteomes" id="UP000002530">
    <property type="component" value="Chromosome 2"/>
</dbReference>
<dbReference type="GO" id="GO:0005829">
    <property type="term" value="C:cytosol"/>
    <property type="evidence" value="ECO:0000318"/>
    <property type="project" value="GO_Central"/>
</dbReference>
<dbReference type="GO" id="GO:0004590">
    <property type="term" value="F:orotidine-5'-phosphate decarboxylase activity"/>
    <property type="evidence" value="ECO:0000318"/>
    <property type="project" value="GO_Central"/>
</dbReference>
<dbReference type="GO" id="GO:0006207">
    <property type="term" value="P:'de novo' pyrimidine nucleobase biosynthetic process"/>
    <property type="evidence" value="ECO:0000318"/>
    <property type="project" value="GO_Central"/>
</dbReference>
<dbReference type="GO" id="GO:0044205">
    <property type="term" value="P:'de novo' UMP biosynthetic process"/>
    <property type="evidence" value="ECO:0000315"/>
    <property type="project" value="AspGD"/>
</dbReference>
<dbReference type="CDD" id="cd04725">
    <property type="entry name" value="OMP_decarboxylase_like"/>
    <property type="match status" value="1"/>
</dbReference>
<dbReference type="FunFam" id="3.20.20.70:FF:000114">
    <property type="entry name" value="Decarboxylase,orotidine phosphate"/>
    <property type="match status" value="1"/>
</dbReference>
<dbReference type="Gene3D" id="3.20.20.70">
    <property type="entry name" value="Aldolase class I"/>
    <property type="match status" value="1"/>
</dbReference>
<dbReference type="InterPro" id="IPR013785">
    <property type="entry name" value="Aldolase_TIM"/>
</dbReference>
<dbReference type="InterPro" id="IPR014732">
    <property type="entry name" value="OMPdecase"/>
</dbReference>
<dbReference type="InterPro" id="IPR018089">
    <property type="entry name" value="OMPdecase_AS"/>
</dbReference>
<dbReference type="InterPro" id="IPR001754">
    <property type="entry name" value="OMPdeCOase_dom"/>
</dbReference>
<dbReference type="InterPro" id="IPR011060">
    <property type="entry name" value="RibuloseP-bd_barrel"/>
</dbReference>
<dbReference type="NCBIfam" id="TIGR01740">
    <property type="entry name" value="pyrF"/>
    <property type="match status" value="1"/>
</dbReference>
<dbReference type="PANTHER" id="PTHR32119">
    <property type="entry name" value="OROTIDINE 5'-PHOSPHATE DECARBOXYLASE"/>
    <property type="match status" value="1"/>
</dbReference>
<dbReference type="PANTHER" id="PTHR32119:SF2">
    <property type="entry name" value="OROTIDINE 5'-PHOSPHATE DECARBOXYLASE"/>
    <property type="match status" value="1"/>
</dbReference>
<dbReference type="Pfam" id="PF00215">
    <property type="entry name" value="OMPdecase"/>
    <property type="match status" value="1"/>
</dbReference>
<dbReference type="SMART" id="SM00934">
    <property type="entry name" value="OMPdecase"/>
    <property type="match status" value="1"/>
</dbReference>
<dbReference type="SUPFAM" id="SSF51366">
    <property type="entry name" value="Ribulose-phoshate binding barrel"/>
    <property type="match status" value="1"/>
</dbReference>
<dbReference type="PROSITE" id="PS00156">
    <property type="entry name" value="OMPDECASE"/>
    <property type="match status" value="1"/>
</dbReference>